<proteinExistence type="evidence at protein level"/>
<dbReference type="EC" id="2.5.1.91"/>
<dbReference type="EMBL" id="AB118853">
    <property type="protein sequence ID" value="BAC82458.1"/>
    <property type="molecule type" value="Genomic_DNA"/>
</dbReference>
<dbReference type="EMBL" id="CU329670">
    <property type="protein sequence ID" value="CAB10123.1"/>
    <property type="molecule type" value="Genomic_DNA"/>
</dbReference>
<dbReference type="PIR" id="T37999">
    <property type="entry name" value="T37999"/>
</dbReference>
<dbReference type="RefSeq" id="NP_594427.1">
    <property type="nucleotide sequence ID" value="NM_001019856.2"/>
</dbReference>
<dbReference type="SMR" id="O13851"/>
<dbReference type="BioGRID" id="279062">
    <property type="interactions" value="3"/>
</dbReference>
<dbReference type="FunCoup" id="O13851">
    <property type="interactions" value="1"/>
</dbReference>
<dbReference type="IntAct" id="O13851">
    <property type="interactions" value="1"/>
</dbReference>
<dbReference type="MINT" id="O13851"/>
<dbReference type="STRING" id="284812.O13851"/>
<dbReference type="iPTMnet" id="O13851"/>
<dbReference type="PaxDb" id="4896-SPAC19G12.12.1"/>
<dbReference type="EnsemblFungi" id="SPAC19G12.12.1">
    <property type="protein sequence ID" value="SPAC19G12.12.1:pep"/>
    <property type="gene ID" value="SPAC19G12.12"/>
</dbReference>
<dbReference type="GeneID" id="2542608"/>
<dbReference type="KEGG" id="spo:2542608"/>
<dbReference type="PomBase" id="SPAC19G12.12">
    <property type="gene designation" value="dlp1"/>
</dbReference>
<dbReference type="VEuPathDB" id="FungiDB:SPAC19G12.12"/>
<dbReference type="eggNOG" id="KOG0776">
    <property type="taxonomic scope" value="Eukaryota"/>
</dbReference>
<dbReference type="HOGENOM" id="CLU_947168_0_0_1"/>
<dbReference type="InParanoid" id="O13851"/>
<dbReference type="OMA" id="IHINIRE"/>
<dbReference type="PhylomeDB" id="O13851"/>
<dbReference type="BRENDA" id="2.5.1.91">
    <property type="organism ID" value="5613"/>
</dbReference>
<dbReference type="Reactome" id="R-SPO-2142789">
    <property type="pathway name" value="Ubiquinol biosynthesis"/>
</dbReference>
<dbReference type="UniPathway" id="UPA00232"/>
<dbReference type="PRO" id="PR:O13851"/>
<dbReference type="Proteomes" id="UP000002485">
    <property type="component" value="Chromosome I"/>
</dbReference>
<dbReference type="GO" id="GO:0032478">
    <property type="term" value="C:heterotetrameric polyprenyl diphosphate synthase complex"/>
    <property type="evidence" value="ECO:0000353"/>
    <property type="project" value="PomBase"/>
</dbReference>
<dbReference type="GO" id="GO:0005739">
    <property type="term" value="C:mitochondrion"/>
    <property type="evidence" value="ECO:0000314"/>
    <property type="project" value="PomBase"/>
</dbReference>
<dbReference type="GO" id="GO:0032476">
    <property type="term" value="C:polyprenyl diphosphate synthase complex"/>
    <property type="evidence" value="ECO:0000318"/>
    <property type="project" value="GO_Central"/>
</dbReference>
<dbReference type="GO" id="GO:0097269">
    <property type="term" value="F:all-trans-decaprenyl-diphosphate synthase activity"/>
    <property type="evidence" value="ECO:0007669"/>
    <property type="project" value="UniProtKB-EC"/>
</dbReference>
<dbReference type="GO" id="GO:0004659">
    <property type="term" value="F:prenyltransferase activity"/>
    <property type="evidence" value="ECO:0000318"/>
    <property type="project" value="GO_Central"/>
</dbReference>
<dbReference type="GO" id="GO:0008299">
    <property type="term" value="P:isoprenoid biosynthetic process"/>
    <property type="evidence" value="ECO:0000315"/>
    <property type="project" value="PomBase"/>
</dbReference>
<dbReference type="GO" id="GO:0006744">
    <property type="term" value="P:ubiquinone biosynthetic process"/>
    <property type="evidence" value="ECO:0000318"/>
    <property type="project" value="GO_Central"/>
</dbReference>
<dbReference type="CDD" id="cd00867">
    <property type="entry name" value="Trans_IPPS"/>
    <property type="match status" value="1"/>
</dbReference>
<dbReference type="Gene3D" id="1.10.600.10">
    <property type="entry name" value="Farnesyl Diphosphate Synthase"/>
    <property type="match status" value="1"/>
</dbReference>
<dbReference type="InterPro" id="IPR008949">
    <property type="entry name" value="Isoprenoid_synthase_dom_sf"/>
</dbReference>
<dbReference type="PANTHER" id="PTHR12001:SF84">
    <property type="entry name" value="DECAPRENYL-DIPHOSPHATE SYNTHASE SUBUNIT 2"/>
    <property type="match status" value="1"/>
</dbReference>
<dbReference type="PANTHER" id="PTHR12001">
    <property type="entry name" value="GERANYLGERANYL PYROPHOSPHATE SYNTHASE"/>
    <property type="match status" value="1"/>
</dbReference>
<dbReference type="SUPFAM" id="SSF48576">
    <property type="entry name" value="Terpenoid synthases"/>
    <property type="match status" value="1"/>
</dbReference>
<feature type="chain" id="PRO_0000123981" description="Decaprenyl-diphosphate synthase subunit 2">
    <location>
        <begin position="1"/>
        <end position="294"/>
    </location>
</feature>
<accession>O13851</accession>
<gene>
    <name type="primary">dlp1</name>
    <name type="ORF">SPAC19G12.12</name>
</gene>
<evidence type="ECO:0000269" key="1">
    <source>
    </source>
</evidence>
<evidence type="ECO:0000269" key="2">
    <source>
    </source>
</evidence>
<evidence type="ECO:0000305" key="3"/>
<reference key="1">
    <citation type="journal article" date="2003" name="Eur. J. Biochem.">
        <title>Fission yeast decaprenyl diphosphate synthase consists of Dps1 and the newly characterized Dlp1 protein in a novel heterotetrameric structure.</title>
        <authorList>
            <person name="Saiki R."/>
            <person name="Nagata A."/>
            <person name="Uchida N."/>
            <person name="Kainou T."/>
            <person name="Matsuda H."/>
            <person name="Kawamukai M."/>
        </authorList>
    </citation>
    <scope>NUCLEOTIDE SEQUENCE [GENOMIC DNA]</scope>
    <scope>FUNCTION</scope>
    <scope>SUBUNIT</scope>
</reference>
<reference key="2">
    <citation type="journal article" date="2002" name="Nature">
        <title>The genome sequence of Schizosaccharomyces pombe.</title>
        <authorList>
            <person name="Wood V."/>
            <person name="Gwilliam R."/>
            <person name="Rajandream M.A."/>
            <person name="Lyne M.H."/>
            <person name="Lyne R."/>
            <person name="Stewart A."/>
            <person name="Sgouros J.G."/>
            <person name="Peat N."/>
            <person name="Hayles J."/>
            <person name="Baker S.G."/>
            <person name="Basham D."/>
            <person name="Bowman S."/>
            <person name="Brooks K."/>
            <person name="Brown D."/>
            <person name="Brown S."/>
            <person name="Chillingworth T."/>
            <person name="Churcher C.M."/>
            <person name="Collins M."/>
            <person name="Connor R."/>
            <person name="Cronin A."/>
            <person name="Davis P."/>
            <person name="Feltwell T."/>
            <person name="Fraser A."/>
            <person name="Gentles S."/>
            <person name="Goble A."/>
            <person name="Hamlin N."/>
            <person name="Harris D.E."/>
            <person name="Hidalgo J."/>
            <person name="Hodgson G."/>
            <person name="Holroyd S."/>
            <person name="Hornsby T."/>
            <person name="Howarth S."/>
            <person name="Huckle E.J."/>
            <person name="Hunt S."/>
            <person name="Jagels K."/>
            <person name="James K.D."/>
            <person name="Jones L."/>
            <person name="Jones M."/>
            <person name="Leather S."/>
            <person name="McDonald S."/>
            <person name="McLean J."/>
            <person name="Mooney P."/>
            <person name="Moule S."/>
            <person name="Mungall K.L."/>
            <person name="Murphy L.D."/>
            <person name="Niblett D."/>
            <person name="Odell C."/>
            <person name="Oliver K."/>
            <person name="O'Neil S."/>
            <person name="Pearson D."/>
            <person name="Quail M.A."/>
            <person name="Rabbinowitsch E."/>
            <person name="Rutherford K.M."/>
            <person name="Rutter S."/>
            <person name="Saunders D."/>
            <person name="Seeger K."/>
            <person name="Sharp S."/>
            <person name="Skelton J."/>
            <person name="Simmonds M.N."/>
            <person name="Squares R."/>
            <person name="Squares S."/>
            <person name="Stevens K."/>
            <person name="Taylor K."/>
            <person name="Taylor R.G."/>
            <person name="Tivey A."/>
            <person name="Walsh S.V."/>
            <person name="Warren T."/>
            <person name="Whitehead S."/>
            <person name="Woodward J.R."/>
            <person name="Volckaert G."/>
            <person name="Aert R."/>
            <person name="Robben J."/>
            <person name="Grymonprez B."/>
            <person name="Weltjens I."/>
            <person name="Vanstreels E."/>
            <person name="Rieger M."/>
            <person name="Schaefer M."/>
            <person name="Mueller-Auer S."/>
            <person name="Gabel C."/>
            <person name="Fuchs M."/>
            <person name="Duesterhoeft A."/>
            <person name="Fritzc C."/>
            <person name="Holzer E."/>
            <person name="Moestl D."/>
            <person name="Hilbert H."/>
            <person name="Borzym K."/>
            <person name="Langer I."/>
            <person name="Beck A."/>
            <person name="Lehrach H."/>
            <person name="Reinhardt R."/>
            <person name="Pohl T.M."/>
            <person name="Eger P."/>
            <person name="Zimmermann W."/>
            <person name="Wedler H."/>
            <person name="Wambutt R."/>
            <person name="Purnelle B."/>
            <person name="Goffeau A."/>
            <person name="Cadieu E."/>
            <person name="Dreano S."/>
            <person name="Gloux S."/>
            <person name="Lelaure V."/>
            <person name="Mottier S."/>
            <person name="Galibert F."/>
            <person name="Aves S.J."/>
            <person name="Xiang Z."/>
            <person name="Hunt C."/>
            <person name="Moore K."/>
            <person name="Hurst S.M."/>
            <person name="Lucas M."/>
            <person name="Rochet M."/>
            <person name="Gaillardin C."/>
            <person name="Tallada V.A."/>
            <person name="Garzon A."/>
            <person name="Thode G."/>
            <person name="Daga R.R."/>
            <person name="Cruzado L."/>
            <person name="Jimenez J."/>
            <person name="Sanchez M."/>
            <person name="del Rey F."/>
            <person name="Benito J."/>
            <person name="Dominguez A."/>
            <person name="Revuelta J.L."/>
            <person name="Moreno S."/>
            <person name="Armstrong J."/>
            <person name="Forsburg S.L."/>
            <person name="Cerutti L."/>
            <person name="Lowe T."/>
            <person name="McCombie W.R."/>
            <person name="Paulsen I."/>
            <person name="Potashkin J."/>
            <person name="Shpakovski G.V."/>
            <person name="Ussery D."/>
            <person name="Barrell B.G."/>
            <person name="Nurse P."/>
        </authorList>
    </citation>
    <scope>NUCLEOTIDE SEQUENCE [LARGE SCALE GENOMIC DNA]</scope>
    <source>
        <strain>972 / ATCC 24843</strain>
    </source>
</reference>
<reference key="3">
    <citation type="journal article" date="2014" name="PLoS ONE">
        <title>Functional conservation of coenzyme Q biosynthetic genes among yeasts, plants, and humans.</title>
        <authorList>
            <person name="Hayashi K."/>
            <person name="Ogiyama Y."/>
            <person name="Yokomi K."/>
            <person name="Nakagawa T."/>
            <person name="Kaino T."/>
            <person name="Kawamukai M."/>
        </authorList>
    </citation>
    <scope>PATHWAY</scope>
    <scope>SUBCELLULAR LOCATION</scope>
</reference>
<organism>
    <name type="scientific">Schizosaccharomyces pombe (strain 972 / ATCC 24843)</name>
    <name type="common">Fission yeast</name>
    <dbReference type="NCBI Taxonomy" id="284812"/>
    <lineage>
        <taxon>Eukaryota</taxon>
        <taxon>Fungi</taxon>
        <taxon>Dikarya</taxon>
        <taxon>Ascomycota</taxon>
        <taxon>Taphrinomycotina</taxon>
        <taxon>Schizosaccharomycetes</taxon>
        <taxon>Schizosaccharomycetales</taxon>
        <taxon>Schizosaccharomycetaceae</taxon>
        <taxon>Schizosaccharomyces</taxon>
    </lineage>
</organism>
<name>DLP1_SCHPO</name>
<comment type="function">
    <text evidence="1">Supplies decaprenyl diphosphate, the precursor for the side chain of the isoprenoid quinones ubiquinone-10.</text>
</comment>
<comment type="catalytic activity">
    <reaction>
        <text>7 isopentenyl diphosphate + (2E,6E)-farnesyl diphosphate = all-trans-decaprenyl diphosphate + 7 diphosphate</text>
        <dbReference type="Rhea" id="RHEA:27802"/>
        <dbReference type="ChEBI" id="CHEBI:33019"/>
        <dbReference type="ChEBI" id="CHEBI:60721"/>
        <dbReference type="ChEBI" id="CHEBI:128769"/>
        <dbReference type="ChEBI" id="CHEBI:175763"/>
        <dbReference type="EC" id="2.5.1.91"/>
    </reaction>
</comment>
<comment type="pathway">
    <text evidence="2">Cofactor biosynthesis; ubiquinone biosynthesis.</text>
</comment>
<comment type="subunit">
    <text evidence="1">Heterotetramer of 2 dps1 and 2 dlp1 subunits.</text>
</comment>
<comment type="interaction">
    <interactant intactId="EBI-7701234">
        <id>O13851</id>
    </interactant>
    <interactant intactId="EBI-1131851">
        <id>P0AD57</id>
        <label>ispB</label>
    </interactant>
    <organismsDiffer>true</organismsDiffer>
    <experiments>2</experiments>
</comment>
<comment type="subcellular location">
    <subcellularLocation>
        <location evidence="2">Mitochondrion</location>
    </subcellularLocation>
</comment>
<comment type="similarity">
    <text evidence="3">Belongs to the FPP/GGPP synthase family.</text>
</comment>
<keyword id="KW-0414">Isoprene biosynthesis</keyword>
<keyword id="KW-0496">Mitochondrion</keyword>
<keyword id="KW-1185">Reference proteome</keyword>
<keyword id="KW-0808">Transferase</keyword>
<keyword id="KW-0831">Ubiquinone biosynthesis</keyword>
<protein>
    <recommendedName>
        <fullName>Decaprenyl-diphosphate synthase subunit 2</fullName>
        <ecNumber>2.5.1.91</ecNumber>
    </recommendedName>
    <alternativeName>
        <fullName>All-trans-decaprenyl-diphosphate synthase subunit 2</fullName>
    </alternativeName>
    <alternativeName>
        <fullName>Decaprenyl pyrophosphate synthase subunit 2</fullName>
    </alternativeName>
</protein>
<sequence length="294" mass="32411">MSFPFASLLKRPSAISSLLSLKKPGSWSSILLKAVGVLSRDSRWHSDLLKMLTEEMDSLNGQINTWTDNNPLLDEITKPYRKSSTRFFHPLLVLLMSRASVNGDPPSQQLFQRYKQLARVTELIHAANIIHINIGEEQSNEQIKLATLVGDYLLGKASVDLAHLENNAITEIMASVIANLVEGHFGSRQNGSVGLSNERTILLQSAFMPAKACLCASILNNSSQYINDACFNYGKFLGLSLQLAHKPVSPDAQVLQKNNDILKTYVENAKSSLSVFPDIEAKQALMEIANSVSK</sequence>